<accession>Q7ZUA6</accession>
<accession>B2CW63</accession>
<accession>E0W5S4</accession>
<accession>E0W5S5</accession>
<accession>E0W5S6</accession>
<accession>E0W5S7</accession>
<accession>Q7ZZZ1</accession>
<accession>Q90WF5</accession>
<keyword id="KW-0025">Alternative splicing</keyword>
<keyword id="KW-0175">Coiled coil</keyword>
<keyword id="KW-0472">Membrane</keyword>
<keyword id="KW-0675">Receptor</keyword>
<keyword id="KW-1185">Reference proteome</keyword>
<keyword id="KW-0812">Transmembrane</keyword>
<keyword id="KW-1133">Transmembrane helix</keyword>
<comment type="function">
    <text>Putative membrane receptor.</text>
</comment>
<comment type="subcellular location">
    <subcellularLocation>
        <location evidence="1">Membrane</location>
        <topology evidence="1">Multi-pass membrane protein</topology>
    </subcellularLocation>
</comment>
<comment type="alternative products">
    <event type="alternative splicing"/>
    <isoform>
        <id>Q7ZUA6-1</id>
        <name>1</name>
        <name>Long</name>
        <sequence type="displayed"/>
    </isoform>
    <isoform>
        <id>Q7ZUA6-2</id>
        <name>2</name>
        <name>Short</name>
        <sequence type="described" ref="VSP_026492"/>
    </isoform>
    <isoform>
        <id>Q7ZUA6-3</id>
        <name>3</name>
        <name>Lmbr1-1</name>
        <sequence type="described" ref="VSP_041201"/>
    </isoform>
    <isoform>
        <id>Q7ZUA6-4</id>
        <name>4</name>
        <sequence type="described" ref="VSP_041206 VSP_041207"/>
    </isoform>
    <isoform>
        <id>Q7ZUA6-5</id>
        <name>5</name>
        <sequence type="described" ref="VSP_041200"/>
    </isoform>
    <isoform>
        <id>Q7ZUA6-6</id>
        <name>6</name>
        <sequence type="described" ref="VSP_041202 VSP_041203"/>
    </isoform>
    <isoform>
        <id>Q7ZUA6-7</id>
        <name>7</name>
        <sequence type="described" ref="VSP_041204 VSP_041205"/>
    </isoform>
</comment>
<comment type="tissue specificity">
    <text evidence="3 5">Detected ubiquitously at low levels throughout the developing embryo. Present initially in the limb mesoderm as the limb bud emerges from the body wall and up-regulated along the posterior margin of the developing limb bud with progression of the limb outgrowth. Higher levels are detected in limb buds, otic vesicles and pharyngeal arches. Isoform 1 is detected in lung, spleen, heart, breast muscle, cartilage and liver of the adult tissues. Isoform 3 is detected in adult lung, spleen, heart and breast muscle but not detected in cartilage and liver.</text>
</comment>
<comment type="similarity">
    <text evidence="9">Belongs to the LIMR family.</text>
</comment>
<organism>
    <name type="scientific">Gallus gallus</name>
    <name type="common">Chicken</name>
    <dbReference type="NCBI Taxonomy" id="9031"/>
    <lineage>
        <taxon>Eukaryota</taxon>
        <taxon>Metazoa</taxon>
        <taxon>Chordata</taxon>
        <taxon>Craniata</taxon>
        <taxon>Vertebrata</taxon>
        <taxon>Euteleostomi</taxon>
        <taxon>Archelosauria</taxon>
        <taxon>Archosauria</taxon>
        <taxon>Dinosauria</taxon>
        <taxon>Saurischia</taxon>
        <taxon>Theropoda</taxon>
        <taxon>Coelurosauria</taxon>
        <taxon>Aves</taxon>
        <taxon>Neognathae</taxon>
        <taxon>Galloanserae</taxon>
        <taxon>Galliformes</taxon>
        <taxon>Phasianidae</taxon>
        <taxon>Phasianinae</taxon>
        <taxon>Gallus</taxon>
    </lineage>
</organism>
<gene>
    <name type="primary">LMBR1</name>
    <name type="synonym">SAPH1</name>
</gene>
<reference key="1">
    <citation type="journal article" date="2004" name="Dev. Dyn.">
        <title>Isolation of the chicken Lmbr1 coding sequence and characterization of its role during chick limb development.</title>
        <authorList>
            <person name="Maas S.A."/>
            <person name="Fallon J.F."/>
        </authorList>
    </citation>
    <scope>NUCLEOTIDE SEQUENCE [MRNA] (ISOFORM 1)</scope>
    <scope>TISSUE SPECIFICITY</scope>
    <source>
        <tissue>Limb bud</tissue>
    </source>
</reference>
<reference key="2">
    <citation type="journal article" date="2006" name="Gene">
        <title>Single nucleotide polymorphisms in the chicken Lmbr1 gene are associated with chicken polydactyly.</title>
        <authorList>
            <person name="Huang Y.Q."/>
            <person name="Deng X.M."/>
            <person name="Du Z.Q."/>
            <person name="Qiu X."/>
            <person name="Du X."/>
            <person name="Chen W."/>
            <person name="Morisson M."/>
            <person name="Leroux S."/>
            <person name="Ponce de Leon F.A."/>
            <person name="Da Y."/>
            <person name="Li N."/>
        </authorList>
    </citation>
    <scope>NUCLEOTIDE SEQUENCE [MRNA] (ISOFORMS 1 AND 2)</scope>
    <scope>VARIANT GLN-266</scope>
    <source>
        <tissue>Embryo</tissue>
    </source>
</reference>
<reference key="3">
    <citation type="submission" date="2007-04" db="EMBL/GenBank/DDBJ databases">
        <authorList>
            <person name="Qiu X.P."/>
        </authorList>
    </citation>
    <scope>SEQUENCE REVISION TO N-TERMINUS</scope>
</reference>
<reference key="4">
    <citation type="journal article" date="2011" name="Mol. Biol. Rep.">
        <title>Identification of an alternative splicing isoform of chicken Lmbr1.</title>
        <authorList>
            <person name="Huang Y."/>
            <person name="Chen W."/>
            <person name="Li N."/>
            <person name="Deng X."/>
            <person name="Kang X."/>
            <person name="Liu X."/>
        </authorList>
    </citation>
    <scope>NUCLEOTIDE SEQUENCE [MRNA] (ISOFORMS 1 AND 3)</scope>
    <scope>ALTERNATIVE SPLICING</scope>
    <scope>TISSUE SPECIFICITY</scope>
    <scope>VARIANT GLN-266</scope>
    <source>
        <tissue>Heart</tissue>
    </source>
</reference>
<reference key="5">
    <citation type="submission" date="2003-03" db="EMBL/GenBank/DDBJ databases">
        <title>Expression of Lmbr1 in the chick limb bud.</title>
        <authorList>
            <person name="Komaguchi C."/>
            <person name="Yamamoto Y."/>
            <person name="Nishimatsu S."/>
            <person name="Nohno T."/>
        </authorList>
    </citation>
    <scope>NUCLEOTIDE SEQUENCE [MRNA] (ISOFORM 1)</scope>
    <source>
        <tissue>Embryo</tissue>
    </source>
</reference>
<reference key="6">
    <citation type="submission" date="2008-03" db="EMBL/GenBank/DDBJ databases">
        <title>Identification of the alternative splice forms of chicken Lmbr1.</title>
        <authorList>
            <person name="Huang Y."/>
            <person name="Chen W."/>
            <person name="Li N."/>
        </authorList>
    </citation>
    <scope>NUCLEOTIDE SEQUENCE [MRNA] (ISOFORMS 4; 5; 6 AND 7)</scope>
</reference>
<reference key="7">
    <citation type="submission" date="2001-01" db="EMBL/GenBank/DDBJ databases">
        <title>Chick ortholog of human preaxial polydactyly candidate gene is expressed in the limb bud.</title>
        <authorList>
            <person name="Horikoshi T."/>
            <person name="Tao H."/>
            <person name="Ohuchi H."/>
            <person name="Shibata M."/>
            <person name="Endo N."/>
            <person name="Suzuki M."/>
            <person name="Takahashi E."/>
            <person name="Shinka T."/>
            <person name="Nakahori Y."/>
            <person name="Ayusawa D."/>
            <person name="Nakabayashi K."/>
            <person name="Scherer S.W."/>
            <person name="Noji S."/>
        </authorList>
    </citation>
    <scope>NUCLEOTIDE SEQUENCE [MRNA] OF 270-427 (ISOFORMS 1/2)</scope>
    <source>
        <tissue>Limb bud</tissue>
    </source>
</reference>
<feature type="chain" id="PRO_0000053908" description="Limb region 1 protein homolog">
    <location>
        <begin position="1"/>
        <end position="488"/>
    </location>
</feature>
<feature type="topological domain" description="Extracellular" evidence="2">
    <location>
        <begin position="1"/>
        <end position="18"/>
    </location>
</feature>
<feature type="transmembrane region" description="Helical" evidence="2">
    <location>
        <begin position="19"/>
        <end position="39"/>
    </location>
</feature>
<feature type="topological domain" description="Cytoplasmic" evidence="2">
    <location>
        <begin position="40"/>
        <end position="61"/>
    </location>
</feature>
<feature type="transmembrane region" description="Helical" evidence="2">
    <location>
        <begin position="62"/>
        <end position="82"/>
    </location>
</feature>
<feature type="topological domain" description="Extracellular" evidence="2">
    <location>
        <begin position="83"/>
        <end position="109"/>
    </location>
</feature>
<feature type="transmembrane region" description="Helical" evidence="2">
    <location>
        <begin position="110"/>
        <end position="130"/>
    </location>
</feature>
<feature type="topological domain" description="Cytoplasmic" evidence="2">
    <location>
        <begin position="131"/>
        <end position="150"/>
    </location>
</feature>
<feature type="transmembrane region" description="Helical" evidence="2">
    <location>
        <begin position="151"/>
        <end position="171"/>
    </location>
</feature>
<feature type="topological domain" description="Extracellular" evidence="2">
    <location>
        <begin position="172"/>
        <end position="186"/>
    </location>
</feature>
<feature type="transmembrane region" description="Helical" evidence="2">
    <location>
        <begin position="187"/>
        <end position="207"/>
    </location>
</feature>
<feature type="topological domain" description="Cytoplasmic" evidence="2">
    <location>
        <begin position="208"/>
        <end position="295"/>
    </location>
</feature>
<feature type="transmembrane region" description="Helical" evidence="2">
    <location>
        <begin position="296"/>
        <end position="316"/>
    </location>
</feature>
<feature type="topological domain" description="Extracellular" evidence="2">
    <location>
        <begin position="317"/>
        <end position="338"/>
    </location>
</feature>
<feature type="transmembrane region" description="Helical" evidence="2">
    <location>
        <begin position="339"/>
        <end position="359"/>
    </location>
</feature>
<feature type="topological domain" description="Cytoplasmic" evidence="2">
    <location>
        <begin position="360"/>
        <end position="382"/>
    </location>
</feature>
<feature type="transmembrane region" description="Helical" evidence="2">
    <location>
        <begin position="383"/>
        <end position="403"/>
    </location>
</feature>
<feature type="topological domain" description="Extracellular" evidence="2">
    <location>
        <begin position="404"/>
        <end position="425"/>
    </location>
</feature>
<feature type="transmembrane region" description="Helical" evidence="2">
    <location>
        <begin position="426"/>
        <end position="446"/>
    </location>
</feature>
<feature type="topological domain" description="Cytoplasmic" evidence="2">
    <location>
        <begin position="447"/>
        <end position="488"/>
    </location>
</feature>
<feature type="coiled-coil region" evidence="2">
    <location>
        <begin position="246"/>
        <end position="286"/>
    </location>
</feature>
<feature type="splice variant" id="VSP_041200" description="In isoform 5." evidence="8">
    <location>
        <begin position="1"/>
        <end position="357"/>
    </location>
</feature>
<feature type="splice variant" id="VSP_041201" description="In isoform 3." evidence="7">
    <location>
        <begin position="1"/>
        <end position="296"/>
    </location>
</feature>
<feature type="splice variant" id="VSP_041202" description="In isoform 6." evidence="8">
    <original>ICFLLFAVL</original>
    <variation>GREVFRILQ</variation>
    <location>
        <begin position="22"/>
        <end position="30"/>
    </location>
</feature>
<feature type="splice variant" id="VSP_041203" description="In isoform 6." evidence="8">
    <location>
        <begin position="31"/>
        <end position="488"/>
    </location>
</feature>
<feature type="splice variant" id="VSP_041204" description="In isoform 7." evidence="8">
    <original>LFLSTFTLAVSAGAVLLLPFSIISNEILLSFPQNYYIQWLNGSLIHGLWNLASLFSNLCLFVLMPFA</original>
    <variation>FMESCFSFFQFMFVCVDALCLFLLGVGRICWLKKGDQSTHSGDPCNAHTSCTAYPWNRMGGFSSHRQ</variation>
    <location>
        <begin position="60"/>
        <end position="126"/>
    </location>
</feature>
<feature type="splice variant" id="VSP_026492" description="In isoform 2." evidence="6">
    <location>
        <begin position="60"/>
        <end position="105"/>
    </location>
</feature>
<feature type="splice variant" id="VSP_041205" description="In isoform 7." evidence="8">
    <location>
        <begin position="127"/>
        <end position="488"/>
    </location>
</feature>
<feature type="splice variant" id="VSP_041206" description="In isoform 4." evidence="8">
    <original>ERRKKASAWERNLVYPAVMILLLIETSISVLLVA</original>
    <variation>GNMLFILPQVDCNLSDFKVLCSVCNSDLINSNCF</variation>
    <location>
        <begin position="279"/>
        <end position="312"/>
    </location>
</feature>
<feature type="splice variant" id="VSP_041207" description="In isoform 4." evidence="8">
    <location>
        <begin position="313"/>
        <end position="488"/>
    </location>
</feature>
<feature type="sequence variant" description="In Lmbr1-N; associated with preaxial polydactyly." evidence="4 5">
    <original>R</original>
    <variation>Q</variation>
    <location>
        <position position="266"/>
    </location>
</feature>
<feature type="sequence conflict" description="In Ref. 2; AAP04355 and 6; ACB59247." evidence="9" ref="2 6">
    <original>N</original>
    <variation>I</variation>
    <location>
        <position position="12"/>
    </location>
</feature>
<feature type="sequence conflict" description="In Ref. 2; AAP04355." evidence="9" ref="2">
    <original>I</original>
    <variation>M</variation>
    <location>
        <position position="81"/>
    </location>
</feature>
<feature type="sequence conflict" description="In Ref. 7; BAB61999." evidence="9" ref="7">
    <original>R</original>
    <variation>Q</variation>
    <location>
        <position position="411"/>
    </location>
</feature>
<feature type="sequence conflict" description="In Ref. 2; AAP04355." evidence="9" ref="2">
    <original>T</original>
    <variation>A</variation>
    <location>
        <position position="487"/>
    </location>
</feature>
<sequence>MEADEVSIREQNFHSQVREYTICFLLFAVLYIVSYFIITRYKRKADEQEDEDAIVNRISLFLSTFTLAVSAGAVLLLPFSIISNEILLSFPQNYYIQWLNGSLIHGLWNLASLFSNLCLFVLMPFAFFFLESEGFAGLKKGIRARILETLVMLILLALLILGIVWVASALIDNDAASMESLYDLWEFYLPYLYSCISLMGCLLLLLCTPVGLSRMFTVMGQLLVKPTILEDLDEQMYIITLEEEAIQRKLNGISSTLENQTVELERELEKVKCKKTNLERRKKASAWERNLVYPAVMILLLIETSISVLLVAFNILYLLVDETAMPKGSGGPGIGNASLSTFGFVGAALEIILIFYLMVSSVVGFYSLRFFENFIPRKDDTTMTKIIGNCVSILVLSSALPVMSRTLGITRFDLLGDFGRFNWLGNFYIVLSYNLLFAIMTTLCLVRKFTSAVREELLKALGLDKLHLSNNPRDSETKPSANGHQKTL</sequence>
<name>LMBR1_CHICK</name>
<protein>
    <recommendedName>
        <fullName>Limb region 1 protein homolog</fullName>
    </recommendedName>
</protein>
<dbReference type="EMBL" id="AY316689">
    <property type="protein sequence ID" value="AAQ83702.1"/>
    <property type="molecule type" value="mRNA"/>
</dbReference>
<dbReference type="EMBL" id="AY251537">
    <property type="protein sequence ID" value="AAP04355.2"/>
    <property type="molecule type" value="mRNA"/>
</dbReference>
<dbReference type="EMBL" id="EF682500">
    <property type="protein sequence ID" value="ABU82889.1"/>
    <property type="molecule type" value="mRNA"/>
</dbReference>
<dbReference type="EMBL" id="AB105057">
    <property type="protein sequence ID" value="BAC65224.1"/>
    <property type="molecule type" value="mRNA"/>
</dbReference>
<dbReference type="EMBL" id="EF682501">
    <property type="protein sequence ID" value="ABU82890.1"/>
    <property type="molecule type" value="mRNA"/>
</dbReference>
<dbReference type="EMBL" id="EF682502">
    <property type="protein sequence ID" value="ABU82891.1"/>
    <property type="molecule type" value="mRNA"/>
</dbReference>
<dbReference type="EMBL" id="EF682503">
    <property type="protein sequence ID" value="ABU82892.1"/>
    <property type="molecule type" value="mRNA"/>
</dbReference>
<dbReference type="EMBL" id="EU551669">
    <property type="protein sequence ID" value="ACB59247.1"/>
    <property type="molecule type" value="mRNA"/>
</dbReference>
<dbReference type="EMBL" id="AB053322">
    <property type="protein sequence ID" value="BAB61999.1"/>
    <property type="molecule type" value="mRNA"/>
</dbReference>
<dbReference type="RefSeq" id="NP_989503.1">
    <property type="nucleotide sequence ID" value="NM_204172.1"/>
</dbReference>
<dbReference type="RefSeq" id="XP_046766138.1">
    <molecule id="Q7ZUA6-1"/>
    <property type="nucleotide sequence ID" value="XM_046910182.1"/>
</dbReference>
<dbReference type="SMR" id="Q7ZUA6"/>
<dbReference type="FunCoup" id="Q7ZUA6">
    <property type="interactions" value="2765"/>
</dbReference>
<dbReference type="STRING" id="9031.ENSGALP00000048492"/>
<dbReference type="PaxDb" id="9031-ENSGALP00000010317"/>
<dbReference type="Ensembl" id="ENSGALT00010061235.1">
    <molecule id="Q7ZUA6-6"/>
    <property type="protein sequence ID" value="ENSGALP00010037871.1"/>
    <property type="gene ID" value="ENSGALG00010025097.1"/>
</dbReference>
<dbReference type="GeneID" id="373986"/>
<dbReference type="KEGG" id="gga:373986"/>
<dbReference type="CTD" id="64327"/>
<dbReference type="VEuPathDB" id="HostDB:geneid_373986"/>
<dbReference type="eggNOG" id="KOG3722">
    <property type="taxonomic scope" value="Eukaryota"/>
</dbReference>
<dbReference type="GeneTree" id="ENSGT00390000007809"/>
<dbReference type="InParanoid" id="Q7ZUA6"/>
<dbReference type="OrthoDB" id="5596951at2759"/>
<dbReference type="PhylomeDB" id="Q7ZUA6"/>
<dbReference type="PRO" id="PR:Q7ZUA6"/>
<dbReference type="Proteomes" id="UP000000539">
    <property type="component" value="Chromosome 2"/>
</dbReference>
<dbReference type="Bgee" id="ENSGALG00000030379">
    <property type="expression patterns" value="Expressed in spermatid and 13 other cell types or tissues"/>
</dbReference>
<dbReference type="GO" id="GO:0005886">
    <property type="term" value="C:plasma membrane"/>
    <property type="evidence" value="ECO:0000318"/>
    <property type="project" value="GO_Central"/>
</dbReference>
<dbReference type="GO" id="GO:0004888">
    <property type="term" value="F:transmembrane signaling receptor activity"/>
    <property type="evidence" value="ECO:0000318"/>
    <property type="project" value="GO_Central"/>
</dbReference>
<dbReference type="GO" id="GO:0007165">
    <property type="term" value="P:signal transduction"/>
    <property type="evidence" value="ECO:0000318"/>
    <property type="project" value="GO_Central"/>
</dbReference>
<dbReference type="InterPro" id="IPR008075">
    <property type="entry name" value="LIMR"/>
</dbReference>
<dbReference type="InterPro" id="IPR006876">
    <property type="entry name" value="LMBR1-like_membr_prot"/>
</dbReference>
<dbReference type="PANTHER" id="PTHR12625:SF1">
    <property type="entry name" value="LIMB REGION 1 PROTEIN HOMOLOG"/>
    <property type="match status" value="1"/>
</dbReference>
<dbReference type="PANTHER" id="PTHR12625">
    <property type="entry name" value="LIPOCALIN-1 INTERACTING MEMBRANE RECEPTOR LIMR"/>
    <property type="match status" value="1"/>
</dbReference>
<dbReference type="Pfam" id="PF04791">
    <property type="entry name" value="LMBR1"/>
    <property type="match status" value="2"/>
</dbReference>
<dbReference type="PRINTS" id="PR01692">
    <property type="entry name" value="LIPOCALINIMR"/>
</dbReference>
<evidence type="ECO:0000250" key="1"/>
<evidence type="ECO:0000255" key="2"/>
<evidence type="ECO:0000269" key="3">
    <source>
    </source>
</evidence>
<evidence type="ECO:0000269" key="4">
    <source>
    </source>
</evidence>
<evidence type="ECO:0000269" key="5">
    <source>
    </source>
</evidence>
<evidence type="ECO:0000303" key="6">
    <source>
    </source>
</evidence>
<evidence type="ECO:0000303" key="7">
    <source>
    </source>
</evidence>
<evidence type="ECO:0000303" key="8">
    <source ref="6"/>
</evidence>
<evidence type="ECO:0000305" key="9"/>
<proteinExistence type="evidence at transcript level"/>